<gene>
    <name evidence="1" type="primary">cedA</name>
    <name type="ordered locus">SCH_1340</name>
</gene>
<sequence>MMKPLRQQNRQIISYIPRVEPAPPEHAIKMDTFRDVWILRGKYVAFVLTGESFQRSPAFSVPESAQRWANQVRQENEIAD</sequence>
<dbReference type="EMBL" id="AE017220">
    <property type="protein sequence ID" value="AAX65246.1"/>
    <property type="molecule type" value="Genomic_DNA"/>
</dbReference>
<dbReference type="RefSeq" id="WP_000977510.1">
    <property type="nucleotide sequence ID" value="NC_006905.1"/>
</dbReference>
<dbReference type="SMR" id="Q57PW5"/>
<dbReference type="KEGG" id="sec:SCH_1340"/>
<dbReference type="HOGENOM" id="CLU_167445_0_0_6"/>
<dbReference type="Proteomes" id="UP000000538">
    <property type="component" value="Chromosome"/>
</dbReference>
<dbReference type="GO" id="GO:0003677">
    <property type="term" value="F:DNA binding"/>
    <property type="evidence" value="ECO:0007669"/>
    <property type="project" value="UniProtKB-UniRule"/>
</dbReference>
<dbReference type="GO" id="GO:0051301">
    <property type="term" value="P:cell division"/>
    <property type="evidence" value="ECO:0007669"/>
    <property type="project" value="UniProtKB-UniRule"/>
</dbReference>
<dbReference type="Gene3D" id="3.30.730.20">
    <property type="entry name" value="Cell division activator CedA"/>
    <property type="match status" value="1"/>
</dbReference>
<dbReference type="HAMAP" id="MF_01580">
    <property type="entry name" value="CedA"/>
    <property type="match status" value="1"/>
</dbReference>
<dbReference type="InterPro" id="IPR038463">
    <property type="entry name" value="CedA-like_sf"/>
</dbReference>
<dbReference type="InterPro" id="IPR019666">
    <property type="entry name" value="Cell_div_activator_CedA"/>
</dbReference>
<dbReference type="NCBIfam" id="NF007510">
    <property type="entry name" value="PRK10113.1"/>
    <property type="match status" value="1"/>
</dbReference>
<dbReference type="Pfam" id="PF10729">
    <property type="entry name" value="CedA"/>
    <property type="match status" value="1"/>
</dbReference>
<keyword id="KW-0131">Cell cycle</keyword>
<keyword id="KW-0132">Cell division</keyword>
<keyword id="KW-0238">DNA-binding</keyword>
<feature type="chain" id="PRO_0000300213" description="Cell division activator CedA">
    <location>
        <begin position="1"/>
        <end position="80"/>
    </location>
</feature>
<name>CEDA_SALCH</name>
<proteinExistence type="inferred from homology"/>
<organism>
    <name type="scientific">Salmonella choleraesuis (strain SC-B67)</name>
    <dbReference type="NCBI Taxonomy" id="321314"/>
    <lineage>
        <taxon>Bacteria</taxon>
        <taxon>Pseudomonadati</taxon>
        <taxon>Pseudomonadota</taxon>
        <taxon>Gammaproteobacteria</taxon>
        <taxon>Enterobacterales</taxon>
        <taxon>Enterobacteriaceae</taxon>
        <taxon>Salmonella</taxon>
    </lineage>
</organism>
<accession>Q57PW5</accession>
<reference key="1">
    <citation type="journal article" date="2005" name="Nucleic Acids Res.">
        <title>The genome sequence of Salmonella enterica serovar Choleraesuis, a highly invasive and resistant zoonotic pathogen.</title>
        <authorList>
            <person name="Chiu C.-H."/>
            <person name="Tang P."/>
            <person name="Chu C."/>
            <person name="Hu S."/>
            <person name="Bao Q."/>
            <person name="Yu J."/>
            <person name="Chou Y.-Y."/>
            <person name="Wang H.-S."/>
            <person name="Lee Y.-S."/>
        </authorList>
    </citation>
    <scope>NUCLEOTIDE SEQUENCE [LARGE SCALE GENOMIC DNA]</scope>
    <source>
        <strain>SC-B67</strain>
    </source>
</reference>
<comment type="function">
    <text evidence="1">Activates the cell division inhibited by chromosomal DNA over-replication.</text>
</comment>
<comment type="similarity">
    <text evidence="1">Belongs to the CedA family.</text>
</comment>
<protein>
    <recommendedName>
        <fullName evidence="1">Cell division activator CedA</fullName>
    </recommendedName>
</protein>
<evidence type="ECO:0000255" key="1">
    <source>
        <dbReference type="HAMAP-Rule" id="MF_01580"/>
    </source>
</evidence>